<comment type="function">
    <text evidence="1">Cell wall formation. Catalyzes the transfer of a GlcNAc subunit on undecaprenyl-pyrophosphoryl-MurNAc-pentapeptide (lipid intermediate I) to form undecaprenyl-pyrophosphoryl-MurNAc-(pentapeptide)GlcNAc (lipid intermediate II).</text>
</comment>
<comment type="catalytic activity">
    <reaction evidence="1">
        <text>di-trans,octa-cis-undecaprenyl diphospho-N-acetyl-alpha-D-muramoyl-L-alanyl-D-glutamyl-meso-2,6-diaminopimeloyl-D-alanyl-D-alanine + UDP-N-acetyl-alpha-D-glucosamine = di-trans,octa-cis-undecaprenyl diphospho-[N-acetyl-alpha-D-glucosaminyl-(1-&gt;4)]-N-acetyl-alpha-D-muramoyl-L-alanyl-D-glutamyl-meso-2,6-diaminopimeloyl-D-alanyl-D-alanine + UDP + H(+)</text>
        <dbReference type="Rhea" id="RHEA:31227"/>
        <dbReference type="ChEBI" id="CHEBI:15378"/>
        <dbReference type="ChEBI" id="CHEBI:57705"/>
        <dbReference type="ChEBI" id="CHEBI:58223"/>
        <dbReference type="ChEBI" id="CHEBI:61387"/>
        <dbReference type="ChEBI" id="CHEBI:61388"/>
        <dbReference type="EC" id="2.4.1.227"/>
    </reaction>
</comment>
<comment type="pathway">
    <text evidence="1">Cell wall biogenesis; peptidoglycan biosynthesis.</text>
</comment>
<comment type="subcellular location">
    <subcellularLocation>
        <location evidence="1">Cell inner membrane</location>
        <topology evidence="1">Peripheral membrane protein</topology>
        <orientation evidence="1">Cytoplasmic side</orientation>
    </subcellularLocation>
</comment>
<comment type="similarity">
    <text evidence="1">Belongs to the glycosyltransferase 28 family. MurG subfamily.</text>
</comment>
<proteinExistence type="inferred from homology"/>
<name>MURG_SHESW</name>
<evidence type="ECO:0000255" key="1">
    <source>
        <dbReference type="HAMAP-Rule" id="MF_00033"/>
    </source>
</evidence>
<feature type="chain" id="PRO_1000002693" description="UDP-N-acetylglucosamine--N-acetylmuramyl-(pentapeptide) pyrophosphoryl-undecaprenol N-acetylglucosamine transferase">
    <location>
        <begin position="1"/>
        <end position="362"/>
    </location>
</feature>
<feature type="binding site" evidence="1">
    <location>
        <begin position="15"/>
        <end position="17"/>
    </location>
    <ligand>
        <name>UDP-N-acetyl-alpha-D-glucosamine</name>
        <dbReference type="ChEBI" id="CHEBI:57705"/>
    </ligand>
</feature>
<feature type="binding site" evidence="1">
    <location>
        <position position="127"/>
    </location>
    <ligand>
        <name>UDP-N-acetyl-alpha-D-glucosamine</name>
        <dbReference type="ChEBI" id="CHEBI:57705"/>
    </ligand>
</feature>
<feature type="binding site" evidence="1">
    <location>
        <position position="165"/>
    </location>
    <ligand>
        <name>UDP-N-acetyl-alpha-D-glucosamine</name>
        <dbReference type="ChEBI" id="CHEBI:57705"/>
    </ligand>
</feature>
<feature type="binding site" evidence="1">
    <location>
        <position position="191"/>
    </location>
    <ligand>
        <name>UDP-N-acetyl-alpha-D-glucosamine</name>
        <dbReference type="ChEBI" id="CHEBI:57705"/>
    </ligand>
</feature>
<feature type="binding site" evidence="1">
    <location>
        <position position="247"/>
    </location>
    <ligand>
        <name>UDP-N-acetyl-alpha-D-glucosamine</name>
        <dbReference type="ChEBI" id="CHEBI:57705"/>
    </ligand>
</feature>
<feature type="binding site" evidence="1">
    <location>
        <begin position="266"/>
        <end position="271"/>
    </location>
    <ligand>
        <name>UDP-N-acetyl-alpha-D-glucosamine</name>
        <dbReference type="ChEBI" id="CHEBI:57705"/>
    </ligand>
</feature>
<feature type="binding site" evidence="1">
    <location>
        <position position="292"/>
    </location>
    <ligand>
        <name>UDP-N-acetyl-alpha-D-glucosamine</name>
        <dbReference type="ChEBI" id="CHEBI:57705"/>
    </ligand>
</feature>
<dbReference type="EC" id="2.4.1.227" evidence="1"/>
<dbReference type="EMBL" id="CP000503">
    <property type="protein sequence ID" value="ABM23241.1"/>
    <property type="molecule type" value="Genomic_DNA"/>
</dbReference>
<dbReference type="RefSeq" id="WP_011787784.1">
    <property type="nucleotide sequence ID" value="NC_008750.1"/>
</dbReference>
<dbReference type="SMR" id="A1REZ6"/>
<dbReference type="CAZy" id="GT28">
    <property type="family name" value="Glycosyltransferase Family 28"/>
</dbReference>
<dbReference type="KEGG" id="shw:Sputw3181_0390"/>
<dbReference type="HOGENOM" id="CLU_037404_2_0_6"/>
<dbReference type="UniPathway" id="UPA00219"/>
<dbReference type="Proteomes" id="UP000002597">
    <property type="component" value="Chromosome"/>
</dbReference>
<dbReference type="GO" id="GO:0005886">
    <property type="term" value="C:plasma membrane"/>
    <property type="evidence" value="ECO:0007669"/>
    <property type="project" value="UniProtKB-SubCell"/>
</dbReference>
<dbReference type="GO" id="GO:0051991">
    <property type="term" value="F:UDP-N-acetyl-D-glucosamine:N-acetylmuramoyl-L-alanyl-D-glutamyl-meso-2,6-diaminopimelyl-D-alanyl-D-alanine-diphosphoundecaprenol 4-beta-N-acetylglucosaminlytransferase activity"/>
    <property type="evidence" value="ECO:0007669"/>
    <property type="project" value="RHEA"/>
</dbReference>
<dbReference type="GO" id="GO:0050511">
    <property type="term" value="F:undecaprenyldiphospho-muramoylpentapeptide beta-N-acetylglucosaminyltransferase activity"/>
    <property type="evidence" value="ECO:0007669"/>
    <property type="project" value="UniProtKB-UniRule"/>
</dbReference>
<dbReference type="GO" id="GO:0005975">
    <property type="term" value="P:carbohydrate metabolic process"/>
    <property type="evidence" value="ECO:0007669"/>
    <property type="project" value="InterPro"/>
</dbReference>
<dbReference type="GO" id="GO:0051301">
    <property type="term" value="P:cell division"/>
    <property type="evidence" value="ECO:0007669"/>
    <property type="project" value="UniProtKB-KW"/>
</dbReference>
<dbReference type="GO" id="GO:0071555">
    <property type="term" value="P:cell wall organization"/>
    <property type="evidence" value="ECO:0007669"/>
    <property type="project" value="UniProtKB-KW"/>
</dbReference>
<dbReference type="GO" id="GO:0030259">
    <property type="term" value="P:lipid glycosylation"/>
    <property type="evidence" value="ECO:0007669"/>
    <property type="project" value="UniProtKB-UniRule"/>
</dbReference>
<dbReference type="GO" id="GO:0009252">
    <property type="term" value="P:peptidoglycan biosynthetic process"/>
    <property type="evidence" value="ECO:0007669"/>
    <property type="project" value="UniProtKB-UniRule"/>
</dbReference>
<dbReference type="GO" id="GO:0008360">
    <property type="term" value="P:regulation of cell shape"/>
    <property type="evidence" value="ECO:0007669"/>
    <property type="project" value="UniProtKB-KW"/>
</dbReference>
<dbReference type="CDD" id="cd03785">
    <property type="entry name" value="GT28_MurG"/>
    <property type="match status" value="1"/>
</dbReference>
<dbReference type="Gene3D" id="3.40.50.2000">
    <property type="entry name" value="Glycogen Phosphorylase B"/>
    <property type="match status" value="2"/>
</dbReference>
<dbReference type="HAMAP" id="MF_00033">
    <property type="entry name" value="MurG"/>
    <property type="match status" value="1"/>
</dbReference>
<dbReference type="InterPro" id="IPR006009">
    <property type="entry name" value="GlcNAc_MurG"/>
</dbReference>
<dbReference type="InterPro" id="IPR007235">
    <property type="entry name" value="Glyco_trans_28_C"/>
</dbReference>
<dbReference type="InterPro" id="IPR004276">
    <property type="entry name" value="GlycoTrans_28_N"/>
</dbReference>
<dbReference type="NCBIfam" id="TIGR01133">
    <property type="entry name" value="murG"/>
    <property type="match status" value="1"/>
</dbReference>
<dbReference type="PANTHER" id="PTHR21015:SF22">
    <property type="entry name" value="GLYCOSYLTRANSFERASE"/>
    <property type="match status" value="1"/>
</dbReference>
<dbReference type="PANTHER" id="PTHR21015">
    <property type="entry name" value="UDP-N-ACETYLGLUCOSAMINE--N-ACETYLMURAMYL-(PENTAPEPTIDE) PYROPHOSPHORYL-UNDECAPRENOL N-ACETYLGLUCOSAMINE TRANSFERASE 1"/>
    <property type="match status" value="1"/>
</dbReference>
<dbReference type="Pfam" id="PF04101">
    <property type="entry name" value="Glyco_tran_28_C"/>
    <property type="match status" value="1"/>
</dbReference>
<dbReference type="Pfam" id="PF03033">
    <property type="entry name" value="Glyco_transf_28"/>
    <property type="match status" value="1"/>
</dbReference>
<dbReference type="SUPFAM" id="SSF53756">
    <property type="entry name" value="UDP-Glycosyltransferase/glycogen phosphorylase"/>
    <property type="match status" value="1"/>
</dbReference>
<accession>A1REZ6</accession>
<organism>
    <name type="scientific">Shewanella sp. (strain W3-18-1)</name>
    <dbReference type="NCBI Taxonomy" id="351745"/>
    <lineage>
        <taxon>Bacteria</taxon>
        <taxon>Pseudomonadati</taxon>
        <taxon>Pseudomonadota</taxon>
        <taxon>Gammaproteobacteria</taxon>
        <taxon>Alteromonadales</taxon>
        <taxon>Shewanellaceae</taxon>
        <taxon>Shewanella</taxon>
    </lineage>
</organism>
<keyword id="KW-0131">Cell cycle</keyword>
<keyword id="KW-0132">Cell division</keyword>
<keyword id="KW-0997">Cell inner membrane</keyword>
<keyword id="KW-1003">Cell membrane</keyword>
<keyword id="KW-0133">Cell shape</keyword>
<keyword id="KW-0961">Cell wall biogenesis/degradation</keyword>
<keyword id="KW-0328">Glycosyltransferase</keyword>
<keyword id="KW-0472">Membrane</keyword>
<keyword id="KW-0573">Peptidoglycan synthesis</keyword>
<keyword id="KW-0808">Transferase</keyword>
<gene>
    <name evidence="1" type="primary">murG</name>
    <name type="ordered locus">Sputw3181_0390</name>
</gene>
<reference key="1">
    <citation type="submission" date="2006-12" db="EMBL/GenBank/DDBJ databases">
        <title>Complete sequence of Shewanella sp. W3-18-1.</title>
        <authorList>
            <consortium name="US DOE Joint Genome Institute"/>
            <person name="Copeland A."/>
            <person name="Lucas S."/>
            <person name="Lapidus A."/>
            <person name="Barry K."/>
            <person name="Detter J.C."/>
            <person name="Glavina del Rio T."/>
            <person name="Hammon N."/>
            <person name="Israni S."/>
            <person name="Dalin E."/>
            <person name="Tice H."/>
            <person name="Pitluck S."/>
            <person name="Chain P."/>
            <person name="Malfatti S."/>
            <person name="Shin M."/>
            <person name="Vergez L."/>
            <person name="Schmutz J."/>
            <person name="Larimer F."/>
            <person name="Land M."/>
            <person name="Hauser L."/>
            <person name="Kyrpides N."/>
            <person name="Lykidis A."/>
            <person name="Tiedje J."/>
            <person name="Richardson P."/>
        </authorList>
    </citation>
    <scope>NUCLEOTIDE SEQUENCE [LARGE SCALE GENOMIC DNA]</scope>
    <source>
        <strain>W3-18-1</strain>
    </source>
</reference>
<protein>
    <recommendedName>
        <fullName evidence="1">UDP-N-acetylglucosamine--N-acetylmuramyl-(pentapeptide) pyrophosphoryl-undecaprenol N-acetylglucosamine transferase</fullName>
        <ecNumber evidence="1">2.4.1.227</ecNumber>
    </recommendedName>
    <alternativeName>
        <fullName evidence="1">Undecaprenyl-PP-MurNAc-pentapeptide-UDPGlcNAc GlcNAc transferase</fullName>
    </alternativeName>
</protein>
<sequence length="362" mass="38422">MTQEGKRILVMAGGTGGHVFPALAVAKYLAQQGWQVRWLGTADRMEARLVPQYGFDIDFIDIKGVRGNGLVRKLAAPFKVIRSILQAKAVIAEFKPDVVLGMGGFASGPGGVAARLAGIPLVLHEQNAIPGMTNKLLSRIATQVLCAFKNTFTTVKSKVVGNPIRRELIALGAEPKPLADDALKVLVVGGSLGAKIFNDLMPSVVAALSKQQSITVWHQVGKDNLAGVKAAYQQQGQEGGVNIAEFIDDMEAAYRWADVVLCRAGALTVSELAAVGLPSILVPYPHAVDDHQTRNGQVLVEAGAAFLLPQAILDVDKLVGKLQLLANDRTELARMGQRARDVAVLDATEQVAAVCISLAEKG</sequence>